<protein>
    <recommendedName>
        <fullName evidence="1">HTH-type transcriptional regulator UlaR</fullName>
    </recommendedName>
</protein>
<evidence type="ECO:0000255" key="1">
    <source>
        <dbReference type="HAMAP-Rule" id="MF_01563"/>
    </source>
</evidence>
<comment type="function">
    <text evidence="1">Represses ulaG and the ulaABCDEF operon.</text>
</comment>
<comment type="subcellular location">
    <subcellularLocation>
        <location evidence="1">Cytoplasm</location>
    </subcellularLocation>
</comment>
<gene>
    <name evidence="1" type="primary">ulaR</name>
    <name type="ordered locus">BWG_3903</name>
</gene>
<proteinExistence type="inferred from homology"/>
<organism>
    <name type="scientific">Escherichia coli (strain K12 / MC4100 / BW2952)</name>
    <dbReference type="NCBI Taxonomy" id="595496"/>
    <lineage>
        <taxon>Bacteria</taxon>
        <taxon>Pseudomonadati</taxon>
        <taxon>Pseudomonadota</taxon>
        <taxon>Gammaproteobacteria</taxon>
        <taxon>Enterobacterales</taxon>
        <taxon>Enterobacteriaceae</taxon>
        <taxon>Escherichia</taxon>
    </lineage>
</organism>
<feature type="chain" id="PRO_1000215512" description="HTH-type transcriptional regulator UlaR">
    <location>
        <begin position="1"/>
        <end position="251"/>
    </location>
</feature>
<feature type="domain" description="HTH deoR-type" evidence="1">
    <location>
        <begin position="3"/>
        <end position="58"/>
    </location>
</feature>
<feature type="DNA-binding region" description="H-T-H motif" evidence="1">
    <location>
        <begin position="20"/>
        <end position="39"/>
    </location>
</feature>
<accession>C4ZR68</accession>
<name>ULAR_ECOBW</name>
<keyword id="KW-0963">Cytoplasm</keyword>
<keyword id="KW-0238">DNA-binding</keyword>
<keyword id="KW-0678">Repressor</keyword>
<keyword id="KW-0804">Transcription</keyword>
<keyword id="KW-0805">Transcription regulation</keyword>
<sequence length="251" mass="27602">MTEAQRHQILLEMLAQLGFVTVEKVVERLGISPATARRDINKLDESGKLKKVRNGAEAITQQRPRWTPMNLHQAQNHDEKVRIAKAASQLVNPGESVVINCGSTAFLLGREMCGKPVQIITNYLPLANYLIDQEHDSVIIMGGQYNKSQSITLSPQGSENSLYAGHWMFTSGKGLTAEGLYKTDMLTAMAEQKMLSVVGKLVVLVDSSKIGERAGMLFSRADQIDMLITGKNANPEILQQLEAQGVSILRV</sequence>
<dbReference type="EMBL" id="CP001396">
    <property type="protein sequence ID" value="ACR62926.1"/>
    <property type="molecule type" value="Genomic_DNA"/>
</dbReference>
<dbReference type="RefSeq" id="WP_000133631.1">
    <property type="nucleotide sequence ID" value="NC_012759.1"/>
</dbReference>
<dbReference type="SMR" id="C4ZR68"/>
<dbReference type="GeneID" id="75202425"/>
<dbReference type="KEGG" id="ebw:BWG_3903"/>
<dbReference type="HOGENOM" id="CLU_060699_3_2_6"/>
<dbReference type="GO" id="GO:0005737">
    <property type="term" value="C:cytoplasm"/>
    <property type="evidence" value="ECO:0007669"/>
    <property type="project" value="UniProtKB-SubCell"/>
</dbReference>
<dbReference type="GO" id="GO:0003677">
    <property type="term" value="F:DNA binding"/>
    <property type="evidence" value="ECO:0007669"/>
    <property type="project" value="UniProtKB-KW"/>
</dbReference>
<dbReference type="GO" id="GO:0003700">
    <property type="term" value="F:DNA-binding transcription factor activity"/>
    <property type="evidence" value="ECO:0007669"/>
    <property type="project" value="InterPro"/>
</dbReference>
<dbReference type="GO" id="GO:0045892">
    <property type="term" value="P:negative regulation of DNA-templated transcription"/>
    <property type="evidence" value="ECO:0007669"/>
    <property type="project" value="UniProtKB-UniRule"/>
</dbReference>
<dbReference type="FunFam" id="1.10.10.10:FF:000160">
    <property type="entry name" value="HTH-type transcriptional regulator UlaR"/>
    <property type="match status" value="1"/>
</dbReference>
<dbReference type="Gene3D" id="1.10.10.10">
    <property type="entry name" value="Winged helix-like DNA-binding domain superfamily/Winged helix DNA-binding domain"/>
    <property type="match status" value="1"/>
</dbReference>
<dbReference type="HAMAP" id="MF_01563">
    <property type="entry name" value="HTH_type_UlaR"/>
    <property type="match status" value="1"/>
</dbReference>
<dbReference type="InterPro" id="IPR050313">
    <property type="entry name" value="Carb_Metab_HTH_regulators"/>
</dbReference>
<dbReference type="InterPro" id="IPR014036">
    <property type="entry name" value="DeoR-like_C"/>
</dbReference>
<dbReference type="InterPro" id="IPR001034">
    <property type="entry name" value="DeoR_HTH"/>
</dbReference>
<dbReference type="InterPro" id="IPR037171">
    <property type="entry name" value="NagB/RpiA_transferase-like"/>
</dbReference>
<dbReference type="InterPro" id="IPR018356">
    <property type="entry name" value="Tscrpt_reg_HTH_DeoR_CS"/>
</dbReference>
<dbReference type="InterPro" id="IPR023711">
    <property type="entry name" value="Tscrpt_reg_HTH_UlaR"/>
</dbReference>
<dbReference type="InterPro" id="IPR036388">
    <property type="entry name" value="WH-like_DNA-bd_sf"/>
</dbReference>
<dbReference type="InterPro" id="IPR036390">
    <property type="entry name" value="WH_DNA-bd_sf"/>
</dbReference>
<dbReference type="NCBIfam" id="NF010034">
    <property type="entry name" value="PRK13509.1"/>
    <property type="match status" value="1"/>
</dbReference>
<dbReference type="PANTHER" id="PTHR30363">
    <property type="entry name" value="HTH-TYPE TRANSCRIPTIONAL REGULATOR SRLR-RELATED"/>
    <property type="match status" value="1"/>
</dbReference>
<dbReference type="PANTHER" id="PTHR30363:SF55">
    <property type="entry name" value="HTH-TYPE TRANSCRIPTIONAL REGULATOR ULAR"/>
    <property type="match status" value="1"/>
</dbReference>
<dbReference type="Pfam" id="PF00455">
    <property type="entry name" value="DeoRC"/>
    <property type="match status" value="1"/>
</dbReference>
<dbReference type="Pfam" id="PF08220">
    <property type="entry name" value="HTH_DeoR"/>
    <property type="match status" value="1"/>
</dbReference>
<dbReference type="PRINTS" id="PR00037">
    <property type="entry name" value="HTHLACR"/>
</dbReference>
<dbReference type="SMART" id="SM01134">
    <property type="entry name" value="DeoRC"/>
    <property type="match status" value="1"/>
</dbReference>
<dbReference type="SMART" id="SM00420">
    <property type="entry name" value="HTH_DEOR"/>
    <property type="match status" value="1"/>
</dbReference>
<dbReference type="SUPFAM" id="SSF100950">
    <property type="entry name" value="NagB/RpiA/CoA transferase-like"/>
    <property type="match status" value="1"/>
</dbReference>
<dbReference type="SUPFAM" id="SSF46785">
    <property type="entry name" value="Winged helix' DNA-binding domain"/>
    <property type="match status" value="1"/>
</dbReference>
<dbReference type="PROSITE" id="PS00894">
    <property type="entry name" value="HTH_DEOR_1"/>
    <property type="match status" value="1"/>
</dbReference>
<dbReference type="PROSITE" id="PS51000">
    <property type="entry name" value="HTH_DEOR_2"/>
    <property type="match status" value="1"/>
</dbReference>
<reference key="1">
    <citation type="journal article" date="2009" name="J. Bacteriol.">
        <title>Genomic sequencing reveals regulatory mutations and recombinational events in the widely used MC4100 lineage of Escherichia coli K-12.</title>
        <authorList>
            <person name="Ferenci T."/>
            <person name="Zhou Z."/>
            <person name="Betteridge T."/>
            <person name="Ren Y."/>
            <person name="Liu Y."/>
            <person name="Feng L."/>
            <person name="Reeves P.R."/>
            <person name="Wang L."/>
        </authorList>
    </citation>
    <scope>NUCLEOTIDE SEQUENCE [LARGE SCALE GENOMIC DNA]</scope>
    <source>
        <strain>K12 / MC4100 / BW2952</strain>
    </source>
</reference>